<protein>
    <recommendedName>
        <fullName>CD59 glycoprotein</fullName>
    </recommendedName>
    <alternativeName>
        <fullName>1F5 antigen</fullName>
    </alternativeName>
    <alternativeName>
        <fullName>20 kDa homologous restriction factor</fullName>
        <shortName>HRF-20</shortName>
        <shortName>HRF20</shortName>
    </alternativeName>
    <alternativeName>
        <fullName>MAC-inhibitory protein</fullName>
        <shortName>MAC-IP</shortName>
    </alternativeName>
    <alternativeName>
        <fullName>MEM43 antigen</fullName>
    </alternativeName>
    <alternativeName>
        <fullName evidence="18">Membrane attack complex inhibition factor</fullName>
        <shortName evidence="18">MACIF</shortName>
    </alternativeName>
    <alternativeName>
        <fullName>Membrane inhibitor of reactive lysis</fullName>
        <shortName>MIRL</shortName>
    </alternativeName>
    <alternativeName>
        <fullName>Protectin</fullName>
    </alternativeName>
    <cdAntigenName evidence="17">CD59</cdAntigenName>
</protein>
<feature type="signal peptide" evidence="16 24">
    <location>
        <begin position="1"/>
        <end position="25"/>
    </location>
</feature>
<feature type="chain" id="PRO_0000036108" description="CD59 glycoprotein">
    <location>
        <begin position="26"/>
        <end position="102"/>
    </location>
</feature>
<feature type="propeptide" id="PRO_0000036109" description="Removed in mature form" evidence="16">
    <location>
        <begin position="103"/>
        <end position="128"/>
    </location>
</feature>
<feature type="domain" description="UPAR/Ly6">
    <location>
        <begin position="26"/>
        <end position="108"/>
    </location>
</feature>
<feature type="lipid moiety-binding region" description="GPI-anchor amidated asparagine" evidence="6 13">
    <location>
        <position position="102"/>
    </location>
</feature>
<feature type="glycosylation site" description="N-linked (GlcNAc...) asparagine" evidence="7 14">
    <location>
        <position position="43"/>
    </location>
</feature>
<feature type="glycosylation site" description="N-linked (Glc) (glycation) lysine" evidence="1">
    <location>
        <position position="66"/>
    </location>
</feature>
<feature type="glycosylation site" description="O-linked (GalNAc...) threonine" evidence="19">
    <location>
        <position position="76"/>
    </location>
</feature>
<feature type="glycosylation site" description="O-linked (GalNAc...) threonine" evidence="19">
    <location>
        <position position="77"/>
    </location>
</feature>
<feature type="disulfide bond" evidence="12 13 21 22 23">
    <location>
        <begin position="28"/>
        <end position="51"/>
    </location>
</feature>
<feature type="disulfide bond" evidence="12 13 21 22 23">
    <location>
        <begin position="31"/>
        <end position="38"/>
    </location>
</feature>
<feature type="disulfide bond" evidence="12 13 21 22 23">
    <location>
        <begin position="44"/>
        <end position="64"/>
    </location>
</feature>
<feature type="disulfide bond" evidence="12 13 21 22 23">
    <location>
        <begin position="70"/>
        <end position="88"/>
    </location>
</feature>
<feature type="disulfide bond" evidence="12 13 21 22 23">
    <location>
        <begin position="89"/>
        <end position="94"/>
    </location>
</feature>
<feature type="splice variant" id="VSP_060064" description="In isoform 2.">
    <original>GGTSLSEKTVLLLVTPFLAAAWSLHP</original>
    <variation>DTFLKALKDEKLQGLKTKQPGKKSASLS</variation>
    <location>
        <begin position="103"/>
        <end position="128"/>
    </location>
</feature>
<feature type="sequence variant" id="VAR_070124" description="In HACD59; dbSNP:rs397514767." evidence="8">
    <original>C</original>
    <variation>Y</variation>
    <location>
        <position position="89"/>
    </location>
</feature>
<feature type="mutagenesis site" description="No loss of function." evidence="15">
    <original>Y</original>
    <variation>R</variation>
    <location>
        <position position="29"/>
    </location>
</feature>
<feature type="mutagenesis site" description="No loss of function." evidence="15">
    <original>N</original>
    <variation>R</variation>
    <variation>Q</variation>
    <location>
        <position position="33"/>
    </location>
</feature>
<feature type="mutagenesis site" description="No loss of function." evidence="15">
    <original>D</original>
    <variation>R</variation>
    <location>
        <position position="37"/>
    </location>
</feature>
<feature type="mutagenesis site" description="Some loss of function. Some lysis." evidence="15">
    <original>F</original>
    <variation>R</variation>
    <location>
        <position position="48"/>
    </location>
</feature>
<feature type="mutagenesis site" description="Loss of function. Lysis." evidence="15">
    <original>D</original>
    <variation>R</variation>
    <location>
        <position position="49"/>
    </location>
</feature>
<feature type="mutagenesis site" description="No loss of function." evidence="15">
    <original>L</original>
    <variation>E</variation>
    <location>
        <position position="58"/>
    </location>
</feature>
<feature type="mutagenesis site" description="No loss of function." evidence="15">
    <original>K</original>
    <variation>E</variation>
    <location>
        <position position="63"/>
    </location>
</feature>
<feature type="mutagenesis site" description="Complete loss of function. Lysis." evidence="15">
    <original>W</original>
    <variation>E</variation>
    <location>
        <position position="65"/>
    </location>
</feature>
<feature type="mutagenesis site" description="No loss of function." evidence="1">
    <original>K</original>
    <variation>D</variation>
    <location>
        <position position="66"/>
    </location>
</feature>
<feature type="mutagenesis site" description="Loss of glycation mediated inactivation." evidence="1">
    <original>K</original>
    <variation>Q</variation>
    <location>
        <position position="66"/>
    </location>
</feature>
<feature type="mutagenesis site" description="No loss of function." evidence="15">
    <original>F</original>
    <variation>K</variation>
    <location>
        <position position="67"/>
    </location>
</feature>
<feature type="mutagenesis site" description="Loss of glycation mediated inactivation." evidence="1">
    <original>H</original>
    <variation>Q</variation>
    <location>
        <position position="69"/>
    </location>
</feature>
<feature type="mutagenesis site" description="Almost complete loss of function. Lysis." evidence="15">
    <original>F</original>
    <variation>E</variation>
    <location>
        <position position="72"/>
    </location>
</feature>
<feature type="mutagenesis site" description="Loss of function. Lysis." evidence="15">
    <original>R</original>
    <variation>E</variation>
    <location>
        <position position="78"/>
    </location>
</feature>
<feature type="mutagenesis site" description="No loss of function." evidence="15">
    <original>L</original>
    <variation>D</variation>
    <location>
        <position position="79"/>
    </location>
</feature>
<feature type="mutagenesis site" description="Almost complete loss of function. Lysis." evidence="15">
    <original>E</original>
    <variation>R</variation>
    <location>
        <position position="81"/>
    </location>
</feature>
<feature type="mutagenesis site" description="No loss of function." evidence="15">
    <original>N</original>
    <variation>K</variation>
    <location>
        <position position="82"/>
    </location>
</feature>
<feature type="mutagenesis site" description="No loss of function." evidence="15">
    <original>Y</original>
    <variation>R</variation>
    <location>
        <position position="87"/>
    </location>
</feature>
<feature type="strand" evidence="27">
    <location>
        <begin position="27"/>
        <end position="29"/>
    </location>
</feature>
<feature type="strand" evidence="26">
    <location>
        <begin position="32"/>
        <end position="34"/>
    </location>
</feature>
<feature type="strand" evidence="27">
    <location>
        <begin position="41"/>
        <end position="43"/>
    </location>
</feature>
<feature type="strand" evidence="27">
    <location>
        <begin position="50"/>
        <end position="56"/>
    </location>
</feature>
<feature type="strand" evidence="27">
    <location>
        <begin position="59"/>
        <end position="65"/>
    </location>
</feature>
<feature type="helix" evidence="27">
    <location>
        <begin position="67"/>
        <end position="69"/>
    </location>
</feature>
<feature type="helix" evidence="27">
    <location>
        <begin position="72"/>
        <end position="79"/>
    </location>
</feature>
<feature type="strand" evidence="27">
    <location>
        <begin position="85"/>
        <end position="89"/>
    </location>
</feature>
<feature type="strand" evidence="25">
    <location>
        <begin position="91"/>
        <end position="93"/>
    </location>
</feature>
<feature type="helix" evidence="27">
    <location>
        <begin position="97"/>
        <end position="99"/>
    </location>
</feature>
<comment type="function">
    <text evidence="2 5 9 10 11 12 15">Potent inhibitor of the complement membrane attack complex (MAC) action, which protects human cells from damage during complement activation (PubMed:11882685, PubMed:1698710, PubMed:2475111, PubMed:2475570, PubMed:2606909, PubMed:9053451). Acts by binding to the beta-haipins of C8 (C8A and C8B) components of the assembling MAC, forming an intermolecular beta-sheet that prevents incorporation of the multiple copies of C9 required for complete formation of the osmolytic pore (PubMed:11882685, PubMed:1698710, PubMed:36797260).</text>
</comment>
<comment type="function">
    <text evidence="14">The soluble form from urine retains its specific complement binding activity, but exhibits greatly reduced ability to inhibit complement membrane attack complex (MAC) assembly on cell membranes.</text>
</comment>
<comment type="subunit">
    <text evidence="3">Interacts with T-cell surface antigen CD2.</text>
</comment>
<comment type="interaction">
    <interactant intactId="EBI-297972">
        <id>P13987</id>
    </interactant>
    <interactant intactId="EBI-18304435">
        <id>Q5JX71</id>
        <label>FAM209A</label>
    </interactant>
    <organismsDiffer>false</organismsDiffer>
    <experiments>3</experiments>
</comment>
<comment type="interaction">
    <interactant intactId="EBI-297972">
        <id>P13987</id>
    </interactant>
    <interactant intactId="EBI-466029">
        <id>P42858</id>
        <label>HTT</label>
    </interactant>
    <organismsDiffer>false</organismsDiffer>
    <experiments>10</experiments>
</comment>
<comment type="interaction">
    <interactant intactId="EBI-297972">
        <id>P13987</id>
    </interactant>
    <interactant intactId="EBI-998485">
        <id>Q15363</id>
        <label>TMED2</label>
    </interactant>
    <organismsDiffer>false</organismsDiffer>
    <experiments>4</experiments>
</comment>
<comment type="interaction">
    <interactant intactId="EBI-297972">
        <id>P13987</id>
    </interactant>
    <interactant intactId="EBI-8716052">
        <id>Q778I9</id>
        <label>C</label>
    </interactant>
    <organismsDiffer>true</organismsDiffer>
    <experiments>4</experiments>
</comment>
<comment type="interaction">
    <interactant intactId="EBI-297972">
        <id>P13987</id>
    </interactant>
    <interactant intactId="EBI-4405327">
        <id>O35587</id>
        <label>TMED10</label>
    </interactant>
    <organismsDiffer>true</organismsDiffer>
    <experiments>5</experiments>
</comment>
<comment type="subcellular location">
    <subcellularLocation>
        <location evidence="12">Cell membrane</location>
        <topology evidence="13">Lipid-anchor</topology>
        <topology evidence="13">GPI-anchor</topology>
    </subcellularLocation>
    <subcellularLocation>
        <location evidence="14">Secreted</location>
    </subcellularLocation>
    <text evidence="12 14">Localizes to the cell surface (PubMed:36797260). Soluble form found in a number of tissues (PubMed:8670172).</text>
</comment>
<comment type="alternative products">
    <event type="alternative splicing"/>
    <isoform>
        <id>P13987-1</id>
        <name>1</name>
        <sequence type="displayed"/>
    </isoform>
    <isoform>
        <id>P13987-2</id>
        <name>2</name>
        <sequence type="described" ref="VSP_060064"/>
    </isoform>
</comment>
<comment type="PTM">
    <text evidence="7 14">N- and O-glycosylated. The N-glycosylation mainly consists of a family of biantennary complex-type structures with and without lactosamine extensions and outer arm fucose residues. Also significant amounts of triantennary complexes (22%). Variable sialylation also present in the Asn-43 oligosaccharide. The predominant O-glycans are mono-sialylated forms of the disaccharide, Gal-beta-1,3GalNAc, and their sites of attachment are probably on Thr-76 and Thr-77. The GPI-anchor of soluble urinary CD59 has no inositol-associated phospholipid, but is composed of seven different GPI-anchor variants of one or more monosaccharide units. Major variants contain sialic acid, mannose and glucosamine. Sialic acid linked to an N-acetylhexosamine-galactose arm is present in two variants.</text>
</comment>
<comment type="PTM">
    <text evidence="1">Glycated (PubMed:10805801). Glycation is found in diabetic subjects, but only at minimal levels in nondiabetic subjects. Glycated CD59 lacks MAC-inhibitory function and confers to vascular complications of diabetes (PubMed:10805801).</text>
</comment>
<comment type="disease" evidence="4 8">
    <disease id="DI-01329">
        <name>Hemolytic anemia, CD59-mediated, with or without polyneuropathy</name>
        <acronym>HACD59</acronym>
        <description>An autosomal recessive disorder characterized by infantile onset of chronic hemolysis and a relapsing-remitting polyneuropathy, often exacerbated by infection, and manifested as hypotonia, limb muscle weakness, and hyporeflexia.</description>
        <dbReference type="MIM" id="612300"/>
    </disease>
    <text>The disease is caused by variants affecting the gene represented in this entry.</text>
</comment>
<comment type="online information" name="CD59base">
    <link uri="https://databases.lovd.nl/shared/genes/CD59"/>
    <text>CD59 mutation db</text>
</comment>
<comment type="online information" name="Atlas of Genetics and Cytogenetics in Oncology and Haematology">
    <link uri="https://atlasgeneticsoncology.org/gene/985/CD59"/>
</comment>
<organism>
    <name type="scientific">Homo sapiens</name>
    <name type="common">Human</name>
    <dbReference type="NCBI Taxonomy" id="9606"/>
    <lineage>
        <taxon>Eukaryota</taxon>
        <taxon>Metazoa</taxon>
        <taxon>Chordata</taxon>
        <taxon>Craniata</taxon>
        <taxon>Vertebrata</taxon>
        <taxon>Euteleostomi</taxon>
        <taxon>Mammalia</taxon>
        <taxon>Eutheria</taxon>
        <taxon>Euarchontoglires</taxon>
        <taxon>Primates</taxon>
        <taxon>Haplorrhini</taxon>
        <taxon>Catarrhini</taxon>
        <taxon>Hominidae</taxon>
        <taxon>Homo</taxon>
    </lineage>
</organism>
<dbReference type="EMBL" id="M27909">
    <property type="protein sequence ID" value="AAA60543.1"/>
    <property type="molecule type" value="mRNA"/>
</dbReference>
<dbReference type="EMBL" id="M95708">
    <property type="protein sequence ID" value="AAA60957.1"/>
    <property type="molecule type" value="mRNA"/>
</dbReference>
<dbReference type="EMBL" id="X16447">
    <property type="protein sequence ID" value="CAA34467.1"/>
    <property type="molecule type" value="mRNA"/>
</dbReference>
<dbReference type="EMBL" id="X17198">
    <property type="protein sequence ID" value="CAA35059.1"/>
    <property type="molecule type" value="mRNA"/>
</dbReference>
<dbReference type="EMBL" id="M34671">
    <property type="protein sequence ID" value="AAA51952.1"/>
    <property type="molecule type" value="mRNA"/>
</dbReference>
<dbReference type="EMBL" id="M84345">
    <property type="status" value="NOT_ANNOTATED_CDS"/>
    <property type="molecule type" value="Genomic_DNA"/>
</dbReference>
<dbReference type="EMBL" id="M84349">
    <property type="protein sequence ID" value="AAA88793.1"/>
    <property type="molecule type" value="Genomic_DNA"/>
</dbReference>
<dbReference type="EMBL" id="M84346">
    <property type="protein sequence ID" value="AAA88793.1"/>
    <property type="status" value="JOINED"/>
    <property type="molecule type" value="Genomic_DNA"/>
</dbReference>
<dbReference type="EMBL" id="M84348">
    <property type="protein sequence ID" value="AAA88793.1"/>
    <property type="status" value="JOINED"/>
    <property type="molecule type" value="Genomic_DNA"/>
</dbReference>
<dbReference type="EMBL" id="Z14113">
    <property type="protein sequence ID" value="CAA78486.1"/>
    <property type="molecule type" value="Genomic_DNA"/>
</dbReference>
<dbReference type="EMBL" id="Z14114">
    <property type="protein sequence ID" value="CAA78486.1"/>
    <property type="status" value="JOINED"/>
    <property type="molecule type" value="Genomic_DNA"/>
</dbReference>
<dbReference type="EMBL" id="Z14115">
    <property type="protein sequence ID" value="CAA78486.1"/>
    <property type="status" value="JOINED"/>
    <property type="molecule type" value="Genomic_DNA"/>
</dbReference>
<dbReference type="EMBL" id="BT007104">
    <property type="protein sequence ID" value="AAP35768.1"/>
    <property type="molecule type" value="mRNA"/>
</dbReference>
<dbReference type="EMBL" id="AL049629">
    <property type="status" value="NOT_ANNOTATED_CDS"/>
    <property type="molecule type" value="Genomic_DNA"/>
</dbReference>
<dbReference type="EMBL" id="KF455356">
    <property type="status" value="NOT_ANNOTATED_CDS"/>
    <property type="molecule type" value="Genomic_DNA"/>
</dbReference>
<dbReference type="EMBL" id="BC001506">
    <property type="protein sequence ID" value="AAH01506.1"/>
    <property type="molecule type" value="mRNA"/>
</dbReference>
<dbReference type="CCDS" id="CCDS7886.1">
    <molecule id="P13987-1"/>
</dbReference>
<dbReference type="PIR" id="A46252">
    <property type="entry name" value="RWHU59"/>
</dbReference>
<dbReference type="RefSeq" id="NP_000602.1">
    <molecule id="P13987-1"/>
    <property type="nucleotide sequence ID" value="NM_000611.6"/>
</dbReference>
<dbReference type="RefSeq" id="NP_001120695.1">
    <molecule id="P13987-1"/>
    <property type="nucleotide sequence ID" value="NM_001127223.1"/>
</dbReference>
<dbReference type="RefSeq" id="NP_001120697.1">
    <molecule id="P13987-1"/>
    <property type="nucleotide sequence ID" value="NM_001127225.2"/>
</dbReference>
<dbReference type="RefSeq" id="NP_001120698.1">
    <molecule id="P13987-1"/>
    <property type="nucleotide sequence ID" value="NM_001127226.2"/>
</dbReference>
<dbReference type="RefSeq" id="NP_001120699.1">
    <molecule id="P13987-1"/>
    <property type="nucleotide sequence ID" value="NM_001127227.2"/>
</dbReference>
<dbReference type="RefSeq" id="NP_976074.1">
    <molecule id="P13987-1"/>
    <property type="nucleotide sequence ID" value="NM_203329.3"/>
</dbReference>
<dbReference type="RefSeq" id="NP_976075.1">
    <molecule id="P13987-1"/>
    <property type="nucleotide sequence ID" value="NM_203330.2"/>
</dbReference>
<dbReference type="RefSeq" id="NP_976076.1">
    <molecule id="P13987-1"/>
    <property type="nucleotide sequence ID" value="NM_203331.3"/>
</dbReference>
<dbReference type="PDB" id="1CDQ">
    <property type="method" value="NMR"/>
    <property type="chains" value="A=26-102"/>
</dbReference>
<dbReference type="PDB" id="1CDR">
    <property type="method" value="NMR"/>
    <property type="chains" value="A=26-102"/>
</dbReference>
<dbReference type="PDB" id="1CDS">
    <property type="method" value="NMR"/>
    <property type="chains" value="A=26-102"/>
</dbReference>
<dbReference type="PDB" id="1ERG">
    <property type="method" value="NMR"/>
    <property type="chains" value="A=26-95"/>
</dbReference>
<dbReference type="PDB" id="1ERH">
    <property type="method" value="NMR"/>
    <property type="chains" value="A=26-95"/>
</dbReference>
<dbReference type="PDB" id="2J8B">
    <property type="method" value="X-ray"/>
    <property type="resolution" value="1.15 A"/>
    <property type="chains" value="A=26-103"/>
</dbReference>
<dbReference type="PDB" id="2OFS">
    <property type="method" value="X-ray"/>
    <property type="resolution" value="2.12 A"/>
    <property type="chains" value="A=26-99"/>
</dbReference>
<dbReference type="PDB" id="2UWR">
    <property type="method" value="X-ray"/>
    <property type="resolution" value="1.34 A"/>
    <property type="chains" value="A=26-102"/>
</dbReference>
<dbReference type="PDB" id="2UX2">
    <property type="method" value="X-ray"/>
    <property type="resolution" value="1.80 A"/>
    <property type="chains" value="A/B/C=26-102"/>
</dbReference>
<dbReference type="PDB" id="4BIK">
    <property type="method" value="X-ray"/>
    <property type="resolution" value="3.49 A"/>
    <property type="chains" value="B/D=26-102"/>
</dbReference>
<dbReference type="PDB" id="5IMT">
    <property type="method" value="X-ray"/>
    <property type="resolution" value="2.70 A"/>
    <property type="chains" value="D=26-102"/>
</dbReference>
<dbReference type="PDB" id="5IMY">
    <property type="method" value="X-ray"/>
    <property type="resolution" value="2.40 A"/>
    <property type="chains" value="C/D=26-102"/>
</dbReference>
<dbReference type="PDB" id="6ZD0">
    <property type="method" value="EM"/>
    <property type="resolution" value="4.60 A"/>
    <property type="chains" value="B/D/F=26-102"/>
</dbReference>
<dbReference type="PDB" id="8B0F">
    <property type="method" value="EM"/>
    <property type="resolution" value="3.00 A"/>
    <property type="chains" value="G=1-120"/>
</dbReference>
<dbReference type="PDB" id="8B0G">
    <property type="method" value="EM"/>
    <property type="resolution" value="3.30 A"/>
    <property type="chains" value="G=26-102"/>
</dbReference>
<dbReference type="PDB" id="8B0H">
    <property type="method" value="EM"/>
    <property type="resolution" value="3.30 A"/>
    <property type="chains" value="G=1-128"/>
</dbReference>
<dbReference type="PDB" id="8CN6">
    <property type="method" value="X-ray"/>
    <property type="resolution" value="2.43 A"/>
    <property type="chains" value="A/B/C/D/E/F=26-101"/>
</dbReference>
<dbReference type="PDBsum" id="1CDQ"/>
<dbReference type="PDBsum" id="1CDR"/>
<dbReference type="PDBsum" id="1CDS"/>
<dbReference type="PDBsum" id="1ERG"/>
<dbReference type="PDBsum" id="1ERH"/>
<dbReference type="PDBsum" id="2J8B"/>
<dbReference type="PDBsum" id="2OFS"/>
<dbReference type="PDBsum" id="2UWR"/>
<dbReference type="PDBsum" id="2UX2"/>
<dbReference type="PDBsum" id="4BIK"/>
<dbReference type="PDBsum" id="5IMT"/>
<dbReference type="PDBsum" id="5IMY"/>
<dbReference type="PDBsum" id="6ZD0"/>
<dbReference type="PDBsum" id="8B0F"/>
<dbReference type="PDBsum" id="8B0G"/>
<dbReference type="PDBsum" id="8B0H"/>
<dbReference type="PDBsum" id="8CN6"/>
<dbReference type="EMDB" id="EMD-11172"/>
<dbReference type="EMDB" id="EMD-15779"/>
<dbReference type="EMDB" id="EMD-15780"/>
<dbReference type="EMDB" id="EMD-15781"/>
<dbReference type="SMR" id="P13987"/>
<dbReference type="BioGRID" id="107404">
    <property type="interactions" value="100"/>
</dbReference>
<dbReference type="FunCoup" id="P13987">
    <property type="interactions" value="831"/>
</dbReference>
<dbReference type="IntAct" id="P13987">
    <property type="interactions" value="55"/>
</dbReference>
<dbReference type="MINT" id="P13987"/>
<dbReference type="STRING" id="9606.ENSP00000498879"/>
<dbReference type="GlyConnect" id="79">
    <property type="glycosylation" value="115 N-Linked glycans (1 site), 17 O-Linked glycans (4 sites)"/>
</dbReference>
<dbReference type="GlyCosmos" id="P13987">
    <property type="glycosylation" value="7 sites, 144 glycans"/>
</dbReference>
<dbReference type="GlyGen" id="P13987">
    <property type="glycosylation" value="7 sites, 215 N-linked glycans (2 sites), 9 O-linked glycans (6 sites)"/>
</dbReference>
<dbReference type="iPTMnet" id="P13987"/>
<dbReference type="PhosphoSitePlus" id="P13987"/>
<dbReference type="SwissPalm" id="P13987"/>
<dbReference type="BioMuta" id="CD59"/>
<dbReference type="DMDM" id="116021"/>
<dbReference type="CPTAC" id="CPTAC-43"/>
<dbReference type="CPTAC" id="CPTAC-44"/>
<dbReference type="jPOST" id="P13987"/>
<dbReference type="MassIVE" id="P13987"/>
<dbReference type="PaxDb" id="9606-ENSP00000379191"/>
<dbReference type="PeptideAtlas" id="P13987"/>
<dbReference type="ProteomicsDB" id="23185"/>
<dbReference type="ProteomicsDB" id="53014"/>
<dbReference type="Pumba" id="P13987"/>
<dbReference type="ABCD" id="P13987">
    <property type="antibodies" value="1 sequenced antibody"/>
</dbReference>
<dbReference type="Antibodypedia" id="3667">
    <property type="antibodies" value="2025 antibodies from 44 providers"/>
</dbReference>
<dbReference type="DNASU" id="966"/>
<dbReference type="Ensembl" id="ENST00000351554.8">
    <molecule id="P13987-1"/>
    <property type="protein sequence ID" value="ENSP00000340210.3"/>
    <property type="gene ID" value="ENSG00000085063.18"/>
</dbReference>
<dbReference type="Ensembl" id="ENST00000395850.9">
    <molecule id="P13987-1"/>
    <property type="protein sequence ID" value="ENSP00000379191.3"/>
    <property type="gene ID" value="ENSG00000085063.18"/>
</dbReference>
<dbReference type="Ensembl" id="ENST00000415002.7">
    <molecule id="P13987-1"/>
    <property type="protein sequence ID" value="ENSP00000404822.2"/>
    <property type="gene ID" value="ENSG00000085063.18"/>
</dbReference>
<dbReference type="Ensembl" id="ENST00000437761.6">
    <molecule id="P13987-1"/>
    <property type="protein sequence ID" value="ENSP00000410182.2"/>
    <property type="gene ID" value="ENSG00000085063.18"/>
</dbReference>
<dbReference type="Ensembl" id="ENST00000445143.6">
    <molecule id="P13987-1"/>
    <property type="protein sequence ID" value="ENSP00000403511.2"/>
    <property type="gene ID" value="ENSG00000085063.18"/>
</dbReference>
<dbReference type="Ensembl" id="ENST00000527577.5">
    <molecule id="P13987-1"/>
    <property type="protein sequence ID" value="ENSP00000432942.1"/>
    <property type="gene ID" value="ENSG00000085063.18"/>
</dbReference>
<dbReference type="Ensembl" id="ENST00000642928.2">
    <molecule id="P13987-1"/>
    <property type="protein sequence ID" value="ENSP00000494884.1"/>
    <property type="gene ID" value="ENSG00000085063.18"/>
</dbReference>
<dbReference type="Ensembl" id="ENST00000651785.1">
    <molecule id="P13987-1"/>
    <property type="protein sequence ID" value="ENSP00000498879.1"/>
    <property type="gene ID" value="ENSG00000085063.18"/>
</dbReference>
<dbReference type="Ensembl" id="ENST00000652678.1">
    <molecule id="P13987-1"/>
    <property type="protein sequence ID" value="ENSP00000498448.1"/>
    <property type="gene ID" value="ENSG00000085063.18"/>
</dbReference>
<dbReference type="GeneID" id="966"/>
<dbReference type="KEGG" id="hsa:966"/>
<dbReference type="MANE-Select" id="ENST00000642928.2">
    <property type="protein sequence ID" value="ENSP00000494884.1"/>
    <property type="RefSeq nucleotide sequence ID" value="NM_000611.6"/>
    <property type="RefSeq protein sequence ID" value="NP_000602.1"/>
</dbReference>
<dbReference type="AGR" id="HGNC:1689"/>
<dbReference type="CTD" id="966"/>
<dbReference type="DisGeNET" id="966"/>
<dbReference type="GeneCards" id="CD59"/>
<dbReference type="HGNC" id="HGNC:1689">
    <property type="gene designation" value="CD59"/>
</dbReference>
<dbReference type="HPA" id="ENSG00000085063">
    <property type="expression patterns" value="Low tissue specificity"/>
</dbReference>
<dbReference type="MalaCards" id="CD59"/>
<dbReference type="MIM" id="107271">
    <property type="type" value="gene"/>
</dbReference>
<dbReference type="MIM" id="612300">
    <property type="type" value="phenotype"/>
</dbReference>
<dbReference type="neXtProt" id="NX_P13987"/>
<dbReference type="OpenTargets" id="ENSG00000085063"/>
<dbReference type="Orphanet" id="169464">
    <property type="disease" value="Primary CD59 deficiency"/>
</dbReference>
<dbReference type="PharmGKB" id="PA26228"/>
<dbReference type="VEuPathDB" id="HostDB:ENSG00000085063"/>
<dbReference type="eggNOG" id="ENOG502SA4P">
    <property type="taxonomic scope" value="Eukaryota"/>
</dbReference>
<dbReference type="GeneTree" id="ENSGT00390000016309"/>
<dbReference type="HOGENOM" id="CLU_147732_1_0_1"/>
<dbReference type="InParanoid" id="P13987"/>
<dbReference type="OMA" id="CEYSRLA"/>
<dbReference type="OrthoDB" id="10011411at2759"/>
<dbReference type="PAN-GO" id="P13987">
    <property type="GO annotations" value="3 GO annotations based on evolutionary models"/>
</dbReference>
<dbReference type="PhylomeDB" id="P13987"/>
<dbReference type="TreeFam" id="TF338524"/>
<dbReference type="PathwayCommons" id="P13987"/>
<dbReference type="Reactome" id="R-HSA-204005">
    <property type="pathway name" value="COPII-mediated vesicle transport"/>
</dbReference>
<dbReference type="Reactome" id="R-HSA-5694530">
    <property type="pathway name" value="Cargo concentration in the ER"/>
</dbReference>
<dbReference type="Reactome" id="R-HSA-6798695">
    <property type="pathway name" value="Neutrophil degranulation"/>
</dbReference>
<dbReference type="Reactome" id="R-HSA-6807878">
    <property type="pathway name" value="COPI-mediated anterograde transport"/>
</dbReference>
<dbReference type="Reactome" id="R-HSA-977606">
    <property type="pathway name" value="Regulation of Complement cascade"/>
</dbReference>
<dbReference type="SignaLink" id="P13987"/>
<dbReference type="BioGRID-ORCS" id="966">
    <property type="hits" value="10 hits in 1153 CRISPR screens"/>
</dbReference>
<dbReference type="CD-CODE" id="FB4E32DD">
    <property type="entry name" value="Presynaptic clusters and postsynaptic densities"/>
</dbReference>
<dbReference type="ChiTaRS" id="CD59">
    <property type="organism name" value="human"/>
</dbReference>
<dbReference type="EvolutionaryTrace" id="P13987"/>
<dbReference type="GeneWiki" id="CD59"/>
<dbReference type="GenomeRNAi" id="966"/>
<dbReference type="Pharos" id="P13987">
    <property type="development level" value="Tbio"/>
</dbReference>
<dbReference type="PRO" id="PR:P13987"/>
<dbReference type="Proteomes" id="UP000005640">
    <property type="component" value="Chromosome 11"/>
</dbReference>
<dbReference type="RNAct" id="P13987">
    <property type="molecule type" value="protein"/>
</dbReference>
<dbReference type="Bgee" id="ENSG00000085063">
    <property type="expression patterns" value="Expressed in stromal cell of endometrium and 211 other cell types or tissues"/>
</dbReference>
<dbReference type="ExpressionAtlas" id="P13987">
    <property type="expression patterns" value="baseline and differential"/>
</dbReference>
<dbReference type="GO" id="GO:0009986">
    <property type="term" value="C:cell surface"/>
    <property type="evidence" value="ECO:0000314"/>
    <property type="project" value="UniProtKB"/>
</dbReference>
<dbReference type="GO" id="GO:0005789">
    <property type="term" value="C:endoplasmic reticulum membrane"/>
    <property type="evidence" value="ECO:0000304"/>
    <property type="project" value="Reactome"/>
</dbReference>
<dbReference type="GO" id="GO:0033116">
    <property type="term" value="C:endoplasmic reticulum-Golgi intermediate compartment membrane"/>
    <property type="evidence" value="ECO:0000304"/>
    <property type="project" value="Reactome"/>
</dbReference>
<dbReference type="GO" id="GO:0012507">
    <property type="term" value="C:ER to Golgi transport vesicle membrane"/>
    <property type="evidence" value="ECO:0000304"/>
    <property type="project" value="Reactome"/>
</dbReference>
<dbReference type="GO" id="GO:0009897">
    <property type="term" value="C:external side of plasma membrane"/>
    <property type="evidence" value="ECO:0000314"/>
    <property type="project" value="MGI"/>
</dbReference>
<dbReference type="GO" id="GO:0070062">
    <property type="term" value="C:extracellular exosome"/>
    <property type="evidence" value="ECO:0007005"/>
    <property type="project" value="UniProtKB"/>
</dbReference>
<dbReference type="GO" id="GO:0005615">
    <property type="term" value="C:extracellular space"/>
    <property type="evidence" value="ECO:0007005"/>
    <property type="project" value="UniProtKB"/>
</dbReference>
<dbReference type="GO" id="GO:0005925">
    <property type="term" value="C:focal adhesion"/>
    <property type="evidence" value="ECO:0007005"/>
    <property type="project" value="UniProtKB"/>
</dbReference>
<dbReference type="GO" id="GO:0000139">
    <property type="term" value="C:Golgi membrane"/>
    <property type="evidence" value="ECO:0000304"/>
    <property type="project" value="Reactome"/>
</dbReference>
<dbReference type="GO" id="GO:0016020">
    <property type="term" value="C:membrane"/>
    <property type="evidence" value="ECO:0000304"/>
    <property type="project" value="ProtInc"/>
</dbReference>
<dbReference type="GO" id="GO:0005886">
    <property type="term" value="C:plasma membrane"/>
    <property type="evidence" value="ECO:0000318"/>
    <property type="project" value="GO_Central"/>
</dbReference>
<dbReference type="GO" id="GO:0035579">
    <property type="term" value="C:specific granule membrane"/>
    <property type="evidence" value="ECO:0000304"/>
    <property type="project" value="Reactome"/>
</dbReference>
<dbReference type="GO" id="GO:0070821">
    <property type="term" value="C:tertiary granule membrane"/>
    <property type="evidence" value="ECO:0000304"/>
    <property type="project" value="Reactome"/>
</dbReference>
<dbReference type="GO" id="GO:0030133">
    <property type="term" value="C:transport vesicle"/>
    <property type="evidence" value="ECO:0000304"/>
    <property type="project" value="Reactome"/>
</dbReference>
<dbReference type="GO" id="GO:0031982">
    <property type="term" value="C:vesicle"/>
    <property type="evidence" value="ECO:0007005"/>
    <property type="project" value="UniProtKB"/>
</dbReference>
<dbReference type="GO" id="GO:0001848">
    <property type="term" value="F:complement binding"/>
    <property type="evidence" value="ECO:0000318"/>
    <property type="project" value="GO_Central"/>
</dbReference>
<dbReference type="GO" id="GO:0007596">
    <property type="term" value="P:blood coagulation"/>
    <property type="evidence" value="ECO:0000304"/>
    <property type="project" value="ProtInc"/>
</dbReference>
<dbReference type="GO" id="GO:0007166">
    <property type="term" value="P:cell surface receptor signaling pathway"/>
    <property type="evidence" value="ECO:0000304"/>
    <property type="project" value="ProtInc"/>
</dbReference>
<dbReference type="GO" id="GO:0001971">
    <property type="term" value="P:negative regulation of activation of membrane attack complex"/>
    <property type="evidence" value="ECO:0000318"/>
    <property type="project" value="GO_Central"/>
</dbReference>
<dbReference type="GO" id="GO:0030449">
    <property type="term" value="P:regulation of complement activation"/>
    <property type="evidence" value="ECO:0000314"/>
    <property type="project" value="MGI"/>
</dbReference>
<dbReference type="GO" id="GO:1903659">
    <property type="term" value="P:regulation of complement-dependent cytotoxicity"/>
    <property type="evidence" value="ECO:0000314"/>
    <property type="project" value="MGI"/>
</dbReference>
<dbReference type="CDD" id="cd23554">
    <property type="entry name" value="TFP_LU_ECD_CD59"/>
    <property type="match status" value="1"/>
</dbReference>
<dbReference type="FunFam" id="2.10.60.10:FF:000023">
    <property type="entry name" value="CD59 glycoprotein preproprotein"/>
    <property type="match status" value="1"/>
</dbReference>
<dbReference type="Gene3D" id="2.10.60.10">
    <property type="entry name" value="CD59"/>
    <property type="match status" value="1"/>
</dbReference>
<dbReference type="InterPro" id="IPR056949">
    <property type="entry name" value="CD59"/>
</dbReference>
<dbReference type="InterPro" id="IPR018363">
    <property type="entry name" value="CD59_antigen_CS"/>
</dbReference>
<dbReference type="InterPro" id="IPR016054">
    <property type="entry name" value="LY6_UPA_recep-like"/>
</dbReference>
<dbReference type="InterPro" id="IPR045860">
    <property type="entry name" value="Snake_toxin-like_sf"/>
</dbReference>
<dbReference type="PANTHER" id="PTHR10036">
    <property type="entry name" value="CD59 GLYCOPROTEIN"/>
    <property type="match status" value="1"/>
</dbReference>
<dbReference type="PANTHER" id="PTHR10036:SF24">
    <property type="entry name" value="CD59 GLYCOPROTEIN"/>
    <property type="match status" value="1"/>
</dbReference>
<dbReference type="Pfam" id="PF25152">
    <property type="entry name" value="CD59"/>
    <property type="match status" value="1"/>
</dbReference>
<dbReference type="SMART" id="SM00134">
    <property type="entry name" value="LU"/>
    <property type="match status" value="1"/>
</dbReference>
<dbReference type="SUPFAM" id="SSF57302">
    <property type="entry name" value="Snake toxin-like"/>
    <property type="match status" value="1"/>
</dbReference>
<dbReference type="PROSITE" id="PS00983">
    <property type="entry name" value="LY6_UPAR"/>
    <property type="match status" value="1"/>
</dbReference>
<keyword id="KW-0002">3D-structure</keyword>
<keyword id="KW-0025">Alternative splicing</keyword>
<keyword id="KW-1003">Cell membrane</keyword>
<keyword id="KW-0903">Direct protein sequencing</keyword>
<keyword id="KW-0225">Disease variant</keyword>
<keyword id="KW-1015">Disulfide bond</keyword>
<keyword id="KW-0971">Glycation</keyword>
<keyword id="KW-0325">Glycoprotein</keyword>
<keyword id="KW-0336">GPI-anchor</keyword>
<keyword id="KW-0360">Hereditary hemolytic anemia</keyword>
<keyword id="KW-0449">Lipoprotein</keyword>
<keyword id="KW-0472">Membrane</keyword>
<keyword id="KW-1267">Proteomics identification</keyword>
<keyword id="KW-1185">Reference proteome</keyword>
<keyword id="KW-0964">Secreted</keyword>
<keyword id="KW-0732">Signal</keyword>
<reference key="1">
    <citation type="journal article" date="1989" name="J. Exp. Med.">
        <title>CD59, an LY-6-like protein expressed in human lymphoid cells, regulates the action of the complement membrane attack complex on homologous cells.</title>
        <authorList>
            <person name="Davies A."/>
            <person name="Simmons D.L."/>
            <person name="Hale G."/>
            <person name="Harrison R.A."/>
            <person name="Tighe H."/>
            <person name="Lachmann P.J."/>
            <person name="Waldmann H."/>
        </authorList>
    </citation>
    <scope>NUCLEOTIDE SEQUENCE [MRNA]</scope>
    <scope>FUNCTION</scope>
    <source>
        <tissue>T-cell</tissue>
    </source>
</reference>
<reference key="2">
    <citation type="journal article" date="1990" name="Eur. J. Immunol.">
        <title>The CD59 antigen is a structural homologue of murine Ly-6 antigens but lacks interferon inducibility.</title>
        <authorList>
            <person name="Philbrick W.M."/>
            <person name="Palfree R.G.E."/>
            <person name="Roger G.E."/>
            <person name="Maher S.E."/>
            <person name="Bridgett M.M."/>
            <person name="Sirlin S."/>
            <person name="Bothwell A.L.M."/>
        </authorList>
    </citation>
    <scope>NUCLEOTIDE SEQUENCE [MRNA]</scope>
</reference>
<reference key="3">
    <citation type="journal article" date="1989" name="Biochem. Biophys. Res. Commun.">
        <title>20 KDa homologous restriction factor of complement resembles T cell activating protein.</title>
        <authorList>
            <person name="Okada H."/>
            <person name="Nagami Y."/>
            <person name="Takahashi K."/>
            <person name="Okada N."/>
            <person name="Hideshima T."/>
            <person name="Takizawa H."/>
            <person name="Kondo J."/>
        </authorList>
    </citation>
    <scope>NUCLEOTIDE SEQUENCE [MRNA]</scope>
    <scope>FUNCTION</scope>
</reference>
<reference key="4">
    <citation type="journal article" date="1989" name="J. Biochem.">
        <title>Molecular cloning and characterization of MACIF, an inhibitor of membrane channel formation of complement.</title>
        <authorList>
            <person name="Sugita Y."/>
            <person name="Tobe T."/>
            <person name="Oda E."/>
            <person name="Tomita M."/>
            <person name="Yasukawa K."/>
            <person name="Yamaji N."/>
            <person name="Takemoto T."/>
            <person name="Furuichi K."/>
            <person name="Takayama M."/>
            <person name="Yano S."/>
        </authorList>
    </citation>
    <scope>NUCLEOTIDE SEQUENCE [MRNA]</scope>
    <scope>FUNCTION</scope>
</reference>
<reference key="5">
    <citation type="journal article" date="1990" name="DNA Cell Biol.">
        <title>Isolation and expression of the full-length cDNA encoding CD59 antigen of human lymphocytes.</title>
        <authorList>
            <person name="Sawada R."/>
            <person name="Ohashi K."/>
            <person name="Anaguchi H."/>
            <person name="Okazaki H."/>
            <person name="Hattori M."/>
            <person name="Minato N."/>
            <person name="Naruto M."/>
        </authorList>
    </citation>
    <scope>NUCLEOTIDE SEQUENCE [MRNA]</scope>
</reference>
<reference key="6">
    <citation type="journal article" date="1992" name="Proc. Natl. Acad. Sci. U.S.A.">
        <title>Structure of the CD59-encoding gene: further evidence of a relationship to murine lymphocyte antigen Ly-6 protein.</title>
        <authorList>
            <person name="Petranka J.G."/>
            <person name="Fleenor D.E."/>
            <person name="Sykes K."/>
            <person name="Kaufman R.E."/>
            <person name="Rosse W.F."/>
        </authorList>
    </citation>
    <scope>NUCLEOTIDE SEQUENCE [GENOMIC DNA]</scope>
</reference>
<reference key="7">
    <citation type="journal article" date="1992" name="J. Mol. Biol.">
        <title>Gene structure of human CD59 and demonstration that discrete mRNAs are generated by alternative polyadenylation.</title>
        <authorList>
            <person name="Tone M."/>
            <person name="Walsh L.A."/>
            <person name="Waldmann H."/>
        </authorList>
    </citation>
    <scope>NUCLEOTIDE SEQUENCE [GENOMIC DNA]</scope>
    <source>
        <tissue>Blood</tissue>
    </source>
</reference>
<reference key="8">
    <citation type="submission" date="2003-05" db="EMBL/GenBank/DDBJ databases">
        <title>Cloning of human full-length CDSs in BD Creator(TM) system donor vector.</title>
        <authorList>
            <person name="Kalnine N."/>
            <person name="Chen X."/>
            <person name="Rolfs A."/>
            <person name="Halleck A."/>
            <person name="Hines L."/>
            <person name="Eisenstein S."/>
            <person name="Koundinya M."/>
            <person name="Raphael J."/>
            <person name="Moreira D."/>
            <person name="Kelley T."/>
            <person name="LaBaer J."/>
            <person name="Lin Y."/>
            <person name="Phelan M."/>
            <person name="Farmer A."/>
        </authorList>
    </citation>
    <scope>NUCLEOTIDE SEQUENCE [LARGE SCALE MRNA]</scope>
</reference>
<reference key="9">
    <citation type="journal article" date="2006" name="Nature">
        <title>Human chromosome 11 DNA sequence and analysis including novel gene identification.</title>
        <authorList>
            <person name="Taylor T.D."/>
            <person name="Noguchi H."/>
            <person name="Totoki Y."/>
            <person name="Toyoda A."/>
            <person name="Kuroki Y."/>
            <person name="Dewar K."/>
            <person name="Lloyd C."/>
            <person name="Itoh T."/>
            <person name="Takeda T."/>
            <person name="Kim D.-W."/>
            <person name="She X."/>
            <person name="Barlow K.F."/>
            <person name="Bloom T."/>
            <person name="Bruford E."/>
            <person name="Chang J.L."/>
            <person name="Cuomo C.A."/>
            <person name="Eichler E."/>
            <person name="FitzGerald M.G."/>
            <person name="Jaffe D.B."/>
            <person name="LaButti K."/>
            <person name="Nicol R."/>
            <person name="Park H.-S."/>
            <person name="Seaman C."/>
            <person name="Sougnez C."/>
            <person name="Yang X."/>
            <person name="Zimmer A.R."/>
            <person name="Zody M.C."/>
            <person name="Birren B.W."/>
            <person name="Nusbaum C."/>
            <person name="Fujiyama A."/>
            <person name="Hattori M."/>
            <person name="Rogers J."/>
            <person name="Lander E.S."/>
            <person name="Sakaki Y."/>
        </authorList>
    </citation>
    <scope>NUCLEOTIDE SEQUENCE [LARGE SCALE GENOMIC DNA]</scope>
</reference>
<reference key="10">
    <citation type="journal article" date="2004" name="Genome Res.">
        <title>The status, quality, and expansion of the NIH full-length cDNA project: the Mammalian Gene Collection (MGC).</title>
        <authorList>
            <consortium name="The MGC Project Team"/>
        </authorList>
    </citation>
    <scope>NUCLEOTIDE SEQUENCE [LARGE SCALE MRNA]</scope>
    <source>
        <tissue>Colon</tissue>
    </source>
</reference>
<reference key="11">
    <citation type="journal article" date="1989" name="Nucleic Acids Res.">
        <title>Complementary DNA sequence and deduced peptide sequence for CD59/MEM-43 antigen, the human homologue of murine lymphocyte antigen Ly-6C.</title>
        <authorList>
            <person name="Sawada R."/>
            <person name="Ohashi K."/>
            <person name="Okano K."/>
            <person name="Hattori M."/>
            <person name="Minato N."/>
            <person name="Naruto M."/>
        </authorList>
    </citation>
    <scope>NUCLEOTIDE SEQUENCE [MRNA] OF 27-128</scope>
</reference>
<reference key="12">
    <citation type="journal article" date="1996" name="Biochem. J.">
        <title>Structural composition and functional characterization of soluble CD59: heterogeneity of the oligosaccharide and glycophosphoinositol (GPI) anchor revealed by laser-desorption mass spectrometric analysis.</title>
        <authorList>
            <person name="Meri S."/>
            <person name="Lehto T."/>
            <person name="Sutton C.W."/>
            <person name="Tyynelaa J."/>
            <person name="Baumann M."/>
        </authorList>
    </citation>
    <scope>PROTEIN SEQUENCE</scope>
    <scope>FUNCTION</scope>
    <scope>IDENTIFICATION BY MASS SPECTROMETRY</scope>
    <scope>GLYCOSYLATION AT ASN-43</scope>
    <scope>STRUCTURE OF CARBOHYDRATES</scope>
</reference>
<reference key="13">
    <citation type="journal article" date="1990" name="Immunology">
        <title>Human protectin (CD59), an 18,000-20,000 MW complement lysis restricting factor, inhibits C5b-8 catalysed insertion of C9 into lipid bilayers.</title>
        <authorList>
            <person name="Meri S."/>
            <person name="Morgan B.P."/>
            <person name="Davies A."/>
            <person name="Daniels R.H."/>
            <person name="Olavesen M.G."/>
            <person name="Waldmann H."/>
            <person name="Lachmann P.J."/>
        </authorList>
    </citation>
    <scope>FUNCTION</scope>
</reference>
<reference key="14">
    <citation type="journal article" date="1993" name="J. Biochem.">
        <title>Determination of carboxyl-terminal residue and disulfide bonds of MACIF (CD59), a glycosyl-phosphatidylinositol-anchored membrane protein.</title>
        <authorList>
            <person name="Sugita Y."/>
            <person name="Nakano Y."/>
            <person name="Oda E."/>
            <person name="Noda K."/>
            <person name="Tobe T."/>
            <person name="Miura N.H."/>
            <person name="Tomita M."/>
        </authorList>
    </citation>
    <scope>GPI-ANCHOR AT ASN-102</scope>
    <scope>DISULFIDE BONDS</scope>
</reference>
<reference key="15">
    <citation type="journal article" date="1992" name="J. Biol. Chem.">
        <title>The human complement regulatory protein CD59 binds to the alpha-chain of C8 and to the ''b'' domain of C9.</title>
        <authorList>
            <person name="Ninomiya H."/>
            <person name="Sims P.J."/>
        </authorList>
    </citation>
    <scope>INTERACTION WITH C8 AND C9</scope>
</reference>
<reference key="16">
    <citation type="journal article" date="1997" name="Biochemistry">
        <title>Mapping the regions of the complement inhibitor CD59 responsible for its species selective activity.</title>
        <authorList>
            <person name="Yu J."/>
            <person name="Dong S."/>
            <person name="Rushmere N.K."/>
            <person name="Morgan B.P."/>
            <person name="Abagyan R."/>
            <person name="Tomlinson S."/>
        </authorList>
    </citation>
    <scope>IDENTIFICATION OF COMPLEMENT INHIBITORY DOMAIN</scope>
</reference>
<reference key="17">
    <citation type="journal article" date="1997" name="J. Exp. Med.">
        <title>Mutational analysis of the active site and antibody epitopes of the complement-inhibitory glycoprotein, CD59.</title>
        <authorList>
            <person name="Bodian D.L."/>
            <person name="Davis S.J."/>
            <person name="Morgan B.P."/>
            <person name="Rushmere N.K."/>
        </authorList>
    </citation>
    <scope>FUNCTION</scope>
    <scope>MUTAGENESIS OF TYR-29; ASN-33; ASP-37; PHE-48; ASP-49; LEU-58; LYS-63; TRP-65; PHE-67; PHE-72; ARG-78; LEU-79; GLU-81; ASN-82 AND TYR-87</scope>
</reference>
<reference key="18">
    <citation type="journal article" date="1997" name="J. Biol. Chem.">
        <title>The glycosylation of the complement regulatory protein, human erythrocyte CD59.</title>
        <authorList>
            <person name="Rudd P.M."/>
            <person name="Morgan B.P."/>
            <person name="Wormald M.R."/>
            <person name="Harvey D.J."/>
            <person name="van den Berg C.W."/>
            <person name="Davis S.J."/>
            <person name="Ferguson M.A."/>
            <person name="Dwek R.A."/>
        </authorList>
    </citation>
    <scope>STRUCTURE OF CARBOHYDRATES</scope>
    <scope>STRUCTURE OF THE GPI-ANCHOR</scope>
    <scope>PROTEIN SEQUENCE OF N-TERMINUS</scope>
</reference>
<reference key="19">
    <citation type="journal article" date="2000" name="Proc. Natl. Acad. Sci. U.S.A.">
        <title>Molecular basis for a link between complement and the vascular complications of diabetes.</title>
        <authorList>
            <person name="Acosta J."/>
            <person name="Hettinga J."/>
            <person name="Flueckiger R."/>
            <person name="Krumrei N."/>
            <person name="Goldfine A."/>
            <person name="Angarita L."/>
            <person name="Halperin J."/>
        </authorList>
    </citation>
    <scope>INHIBITION BY GLYCATION</scope>
    <scope>GLYCATION AT LYS-66</scope>
    <scope>MUTAGENESIS OF LYS-66 AND HIS-69</scope>
</reference>
<reference key="20">
    <citation type="journal article" date="2002" name="J. Physiol. (Lond.)">
        <title>CD59 blocks not only the insertion of C9 into MAC but inhibits ion channel formation by homologous C5b-8 as well as C5b-9.</title>
        <authorList>
            <person name="Farkas I."/>
            <person name="Baranyi L."/>
            <person name="Ishikawa Y."/>
            <person name="Okada N."/>
            <person name="Bohata C."/>
            <person name="Budai D."/>
            <person name="Fukuda A."/>
            <person name="Imai M."/>
            <person name="Okada H."/>
        </authorList>
    </citation>
    <scope>FUNCTION</scope>
</reference>
<reference key="21">
    <citation type="journal article" date="2007" name="Proteomics">
        <title>Computational approach for identification and characterization of GPI-anchored peptides in proteomics experiments.</title>
        <authorList>
            <person name="Omaetxebarria M.J."/>
            <person name="Elortza F."/>
            <person name="Rodriguez-Suarez E."/>
            <person name="Aloria K."/>
            <person name="Arizmendi J.M."/>
            <person name="Jensen O.N."/>
            <person name="Matthiesen R."/>
        </authorList>
    </citation>
    <scope>GPI-ANCHOR AT ASN-102</scope>
    <scope>IDENTIFICATION BY MASS SPECTROMETRY</scope>
</reference>
<reference key="22">
    <citation type="journal article" date="2008" name="Proteomics">
        <title>Identification of N-linked glycoproteins in human milk by hydrophilic interaction liquid chromatography and mass spectrometry.</title>
        <authorList>
            <person name="Picariello G."/>
            <person name="Ferranti P."/>
            <person name="Mamone G."/>
            <person name="Roepstorff P."/>
            <person name="Addeo F."/>
        </authorList>
    </citation>
    <scope>GLYCOSYLATION [LARGE SCALE ANALYSIS] AT ASN-43</scope>
    <source>
        <tissue>Milk</tissue>
    </source>
</reference>
<reference key="23">
    <citation type="journal article" date="2011" name="BMC Syst. Biol.">
        <title>Initial characterization of the human central proteome.</title>
        <authorList>
            <person name="Burkard T.R."/>
            <person name="Planyavsky M."/>
            <person name="Kaupe I."/>
            <person name="Breitwieser F.P."/>
            <person name="Buerckstuemmer T."/>
            <person name="Bennett K.L."/>
            <person name="Superti-Furga G."/>
            <person name="Colinge J."/>
        </authorList>
    </citation>
    <scope>IDENTIFICATION BY MASS SPECTROMETRY [LARGE SCALE ANALYSIS]</scope>
</reference>
<reference key="24">
    <citation type="journal article" date="2014" name="J. Proteomics">
        <title>An enzyme assisted RP-RPLC approach for in-depth analysis of human liver phosphoproteome.</title>
        <authorList>
            <person name="Bian Y."/>
            <person name="Song C."/>
            <person name="Cheng K."/>
            <person name="Dong M."/>
            <person name="Wang F."/>
            <person name="Huang J."/>
            <person name="Sun D."/>
            <person name="Wang L."/>
            <person name="Ye M."/>
            <person name="Zou H."/>
        </authorList>
    </citation>
    <scope>IDENTIFICATION BY MASS SPECTROMETRY [LARGE SCALE ANALYSIS]</scope>
    <source>
        <tissue>Liver</tissue>
    </source>
</reference>
<reference key="25">
    <citation type="journal article" date="2015" name="Proteomics">
        <title>N-terminome analysis of the human mitochondrial proteome.</title>
        <authorList>
            <person name="Vaca Jacome A.S."/>
            <person name="Rabilloud T."/>
            <person name="Schaeffer-Reiss C."/>
            <person name="Rompais M."/>
            <person name="Ayoub D."/>
            <person name="Lane L."/>
            <person name="Bairoch A."/>
            <person name="Van Dorsselaer A."/>
            <person name="Carapito C."/>
        </authorList>
    </citation>
    <scope>CLEAVAGE OF SIGNAL PEPTIDE [LARGE SCALE ANALYSIS] AFTER SER-25</scope>
    <scope>IDENTIFICATION BY MASS SPECTROMETRY [LARGE SCALE ANALYSIS]</scope>
</reference>
<reference key="26">
    <citation type="journal article" date="1994" name="Biochemistry">
        <title>Three-dimensional solution structure of the extracellular region of the complement regulatory protein CD59, a new cell-surface protein domain related to snake venom neurotoxins.</title>
        <authorList>
            <person name="Kieffer B."/>
            <person name="Driscoll P.C."/>
            <person name="Campbell I.D."/>
            <person name="Willis A.C."/>
            <person name="van der Merwe P.A."/>
            <person name="Davis S.J."/>
        </authorList>
    </citation>
    <scope>STRUCTURE BY NMR OF 26-95</scope>
</reference>
<reference key="27">
    <citation type="journal article" date="1994" name="Structure">
        <title>Structure of a soluble, glycosylated form of the human complement regulatory protein CD59.</title>
        <authorList>
            <person name="Fletcher C.M."/>
            <person name="Harrison R.A."/>
            <person name="Lachmann P.J."/>
            <person name="Neuhaus D."/>
        </authorList>
    </citation>
    <scope>STRUCTURE BY NMR OF 26-102</scope>
    <source>
        <tissue>Urine</tissue>
    </source>
</reference>
<reference evidence="21 22 23" key="28">
    <citation type="journal article" date="2023" name="Nat. Commun.">
        <title>Structural basis for membrane attack complex inhibition by CD59.</title>
        <authorList>
            <person name="Couves E.C."/>
            <person name="Gardner S."/>
            <person name="Voisin T.B."/>
            <person name="Bickel J.K."/>
            <person name="Stansfeld P.J."/>
            <person name="Tate E.W."/>
            <person name="Bubeck D."/>
        </authorList>
    </citation>
    <scope>STRUCTURE BY ELECTRON MICROSCOPY (3.00 ANGSTROMS) OF 1-120 IN COMPLEX WITH THE MEMBRANE ATTACK COMPLEX</scope>
    <scope>FUNCTION</scope>
    <scope>SUBCELLULAR LOCATION</scope>
    <scope>DISULFIDE BONDS</scope>
</reference>
<reference key="29">
    <citation type="journal article" date="1992" name="Eur. J. Immunol.">
        <title>Paroxysmal nocturnal hemoglobinuria due to hereditary nucleotide deletion in the HRF20 (CD59) gene.</title>
        <authorList>
            <person name="Motoyama N."/>
            <person name="Okada N."/>
            <person name="Yamashina M."/>
            <person name="Okada H."/>
        </authorList>
    </citation>
    <scope>INVOLVEMENT IN HACD59</scope>
</reference>
<reference key="30">
    <citation type="journal article" date="2013" name="Blood">
        <title>CD59 deficiency is associated with chronic hemolysis and childhood relapsing immune-mediated polyneuropathy.</title>
        <authorList>
            <person name="Nevo Y."/>
            <person name="Ben-Zeev B."/>
            <person name="Tabib A."/>
            <person name="Straussberg R."/>
            <person name="Anikster Y."/>
            <person name="Shorer Z."/>
            <person name="Fattal-Valevski A."/>
            <person name="Ta-Shma A."/>
            <person name="Aharoni S."/>
            <person name="Rabie M."/>
            <person name="Zenvirt S."/>
            <person name="Goldshmidt H."/>
            <person name="Fellig Y."/>
            <person name="Shaag A."/>
            <person name="Mevorach D."/>
            <person name="Elpeleg O."/>
        </authorList>
    </citation>
    <scope>VARIANT HACD59 TYR-89</scope>
</reference>
<sequence>MGIQGGSVLFGLLLVLAVFCHSGHSLQCYNCPNPTADCKTAVNCSSDFDACLITKAGLQVYNKCWKFEHCNFNDVTTRLRENELTYYCCKKDLCNFNEQLENGGTSLSEKTVLLLVTPFLAAAWSLHP</sequence>
<proteinExistence type="evidence at protein level"/>
<name>CD59_HUMAN</name>
<evidence type="ECO:0000269" key="1">
    <source>
    </source>
</evidence>
<evidence type="ECO:0000269" key="2">
    <source>
    </source>
</evidence>
<evidence type="ECO:0000269" key="3">
    <source>
    </source>
</evidence>
<evidence type="ECO:0000269" key="4">
    <source>
    </source>
</evidence>
<evidence type="ECO:0000269" key="5">
    <source>
    </source>
</evidence>
<evidence type="ECO:0000269" key="6">
    <source>
    </source>
</evidence>
<evidence type="ECO:0000269" key="7">
    <source>
    </source>
</evidence>
<evidence type="ECO:0000269" key="8">
    <source>
    </source>
</evidence>
<evidence type="ECO:0000269" key="9">
    <source>
    </source>
</evidence>
<evidence type="ECO:0000269" key="10">
    <source>
    </source>
</evidence>
<evidence type="ECO:0000269" key="11">
    <source>
    </source>
</evidence>
<evidence type="ECO:0000269" key="12">
    <source>
    </source>
</evidence>
<evidence type="ECO:0000269" key="13">
    <source>
    </source>
</evidence>
<evidence type="ECO:0000269" key="14">
    <source>
    </source>
</evidence>
<evidence type="ECO:0000269" key="15">
    <source>
    </source>
</evidence>
<evidence type="ECO:0000269" key="16">
    <source>
    </source>
</evidence>
<evidence type="ECO:0000303" key="17">
    <source>
    </source>
</evidence>
<evidence type="ECO:0000303" key="18">
    <source>
    </source>
</evidence>
<evidence type="ECO:0000305" key="19"/>
<evidence type="ECO:0000312" key="20">
    <source>
        <dbReference type="HGNC" id="HGNC:1689"/>
    </source>
</evidence>
<evidence type="ECO:0007744" key="21">
    <source>
        <dbReference type="PDB" id="8B0F"/>
    </source>
</evidence>
<evidence type="ECO:0007744" key="22">
    <source>
        <dbReference type="PDB" id="8B0G"/>
    </source>
</evidence>
<evidence type="ECO:0007744" key="23">
    <source>
        <dbReference type="PDB" id="8B0H"/>
    </source>
</evidence>
<evidence type="ECO:0007744" key="24">
    <source>
    </source>
</evidence>
<evidence type="ECO:0007829" key="25">
    <source>
        <dbReference type="PDB" id="1CDR"/>
    </source>
</evidence>
<evidence type="ECO:0007829" key="26">
    <source>
        <dbReference type="PDB" id="1ERG"/>
    </source>
</evidence>
<evidence type="ECO:0007829" key="27">
    <source>
        <dbReference type="PDB" id="2J8B"/>
    </source>
</evidence>
<accession>P13987</accession>
<accession>E9PR17</accession>
<gene>
    <name evidence="17 20" type="primary">CD59</name>
    <name type="synonym">MIC11</name>
    <name type="synonym">MIN1</name>
    <name type="synonym">MIN2</name>
    <name type="synonym">MIN3</name>
    <name type="synonym">MSK21</name>
</gene>